<gene>
    <name evidence="1" type="primary">rbfA</name>
    <name type="ordered locus">VC0395_A0175</name>
    <name type="ordered locus">VC395_0661</name>
</gene>
<sequence>MPKEFSRTQRVAQQLQKELAMILQREVRDSRLGMVTISDVEVSRDLAYAKVFVTFLCIGEQTPESCLAALREHEVQIRMMLGKQIRLRLTPEIRFYYDNTLVEGMRMSNLVTEVINSDKRRKHEAGRDEDEA</sequence>
<protein>
    <recommendedName>
        <fullName evidence="1">Ribosome-binding factor A</fullName>
    </recommendedName>
</protein>
<accession>A5F927</accession>
<accession>C3LXV5</accession>
<reference key="1">
    <citation type="submission" date="2007-03" db="EMBL/GenBank/DDBJ databases">
        <authorList>
            <person name="Heidelberg J."/>
        </authorList>
    </citation>
    <scope>NUCLEOTIDE SEQUENCE [LARGE SCALE GENOMIC DNA]</scope>
    <source>
        <strain>ATCC 39541 / Classical Ogawa 395 / O395</strain>
    </source>
</reference>
<reference key="2">
    <citation type="journal article" date="2008" name="PLoS ONE">
        <title>A recalibrated molecular clock and independent origins for the cholera pandemic clones.</title>
        <authorList>
            <person name="Feng L."/>
            <person name="Reeves P.R."/>
            <person name="Lan R."/>
            <person name="Ren Y."/>
            <person name="Gao C."/>
            <person name="Zhou Z."/>
            <person name="Ren Y."/>
            <person name="Cheng J."/>
            <person name="Wang W."/>
            <person name="Wang J."/>
            <person name="Qian W."/>
            <person name="Li D."/>
            <person name="Wang L."/>
        </authorList>
    </citation>
    <scope>NUCLEOTIDE SEQUENCE [LARGE SCALE GENOMIC DNA]</scope>
    <source>
        <strain>ATCC 39541 / Classical Ogawa 395 / O395</strain>
    </source>
</reference>
<feature type="chain" id="PRO_0000321267" description="Ribosome-binding factor A">
    <location>
        <begin position="1"/>
        <end position="132"/>
    </location>
</feature>
<organism>
    <name type="scientific">Vibrio cholerae serotype O1 (strain ATCC 39541 / Classical Ogawa 395 / O395)</name>
    <dbReference type="NCBI Taxonomy" id="345073"/>
    <lineage>
        <taxon>Bacteria</taxon>
        <taxon>Pseudomonadati</taxon>
        <taxon>Pseudomonadota</taxon>
        <taxon>Gammaproteobacteria</taxon>
        <taxon>Vibrionales</taxon>
        <taxon>Vibrionaceae</taxon>
        <taxon>Vibrio</taxon>
    </lineage>
</organism>
<proteinExistence type="inferred from homology"/>
<comment type="function">
    <text evidence="1">One of several proteins that assist in the late maturation steps of the functional core of the 30S ribosomal subunit. Associates with free 30S ribosomal subunits (but not with 30S subunits that are part of 70S ribosomes or polysomes). Required for efficient processing of 16S rRNA. May interact with the 5'-terminal helix region of 16S rRNA.</text>
</comment>
<comment type="subunit">
    <text evidence="1">Monomer. Binds 30S ribosomal subunits, but not 50S ribosomal subunits or 70S ribosomes.</text>
</comment>
<comment type="subcellular location">
    <subcellularLocation>
        <location evidence="1">Cytoplasm</location>
    </subcellularLocation>
</comment>
<comment type="similarity">
    <text evidence="1">Belongs to the RbfA family.</text>
</comment>
<comment type="sequence caution" evidence="2">
    <conflict type="erroneous initiation">
        <sequence resource="EMBL-CDS" id="ABQ19574"/>
    </conflict>
    <text>Extended N-terminus.</text>
</comment>
<comment type="sequence caution" evidence="2">
    <conflict type="erroneous initiation">
        <sequence resource="EMBL-CDS" id="ACP08679"/>
    </conflict>
    <text>Extended N-terminus.</text>
</comment>
<evidence type="ECO:0000255" key="1">
    <source>
        <dbReference type="HAMAP-Rule" id="MF_00003"/>
    </source>
</evidence>
<evidence type="ECO:0000305" key="2"/>
<name>RBFA_VIBC3</name>
<dbReference type="EMBL" id="CP000627">
    <property type="protein sequence ID" value="ABQ19574.1"/>
    <property type="status" value="ALT_INIT"/>
    <property type="molecule type" value="Genomic_DNA"/>
</dbReference>
<dbReference type="EMBL" id="CP001235">
    <property type="protein sequence ID" value="ACP08679.1"/>
    <property type="status" value="ALT_INIT"/>
    <property type="molecule type" value="Genomic_DNA"/>
</dbReference>
<dbReference type="RefSeq" id="WP_001123656.1">
    <property type="nucleotide sequence ID" value="NZ_JAACZH010000006.1"/>
</dbReference>
<dbReference type="SMR" id="A5F927"/>
<dbReference type="GeneID" id="69720600"/>
<dbReference type="KEGG" id="vco:VC0395_A0175"/>
<dbReference type="KEGG" id="vcr:VC395_0661"/>
<dbReference type="PATRIC" id="fig|345073.21.peg.642"/>
<dbReference type="eggNOG" id="COG0858">
    <property type="taxonomic scope" value="Bacteria"/>
</dbReference>
<dbReference type="HOGENOM" id="CLU_089475_5_0_6"/>
<dbReference type="OrthoDB" id="307788at2"/>
<dbReference type="Proteomes" id="UP000000249">
    <property type="component" value="Chromosome 2"/>
</dbReference>
<dbReference type="GO" id="GO:0005829">
    <property type="term" value="C:cytosol"/>
    <property type="evidence" value="ECO:0007669"/>
    <property type="project" value="TreeGrafter"/>
</dbReference>
<dbReference type="GO" id="GO:0043024">
    <property type="term" value="F:ribosomal small subunit binding"/>
    <property type="evidence" value="ECO:0007669"/>
    <property type="project" value="TreeGrafter"/>
</dbReference>
<dbReference type="GO" id="GO:0030490">
    <property type="term" value="P:maturation of SSU-rRNA"/>
    <property type="evidence" value="ECO:0007669"/>
    <property type="project" value="UniProtKB-UniRule"/>
</dbReference>
<dbReference type="FunFam" id="3.30.300.20:FF:000007">
    <property type="entry name" value="Ribosome-binding factor A"/>
    <property type="match status" value="1"/>
</dbReference>
<dbReference type="Gene3D" id="3.30.300.20">
    <property type="match status" value="1"/>
</dbReference>
<dbReference type="HAMAP" id="MF_00003">
    <property type="entry name" value="RbfA"/>
    <property type="match status" value="1"/>
</dbReference>
<dbReference type="InterPro" id="IPR015946">
    <property type="entry name" value="KH_dom-like_a/b"/>
</dbReference>
<dbReference type="InterPro" id="IPR000238">
    <property type="entry name" value="RbfA"/>
</dbReference>
<dbReference type="InterPro" id="IPR023799">
    <property type="entry name" value="RbfA_dom_sf"/>
</dbReference>
<dbReference type="InterPro" id="IPR020053">
    <property type="entry name" value="Ribosome-bd_factorA_CS"/>
</dbReference>
<dbReference type="NCBIfam" id="TIGR00082">
    <property type="entry name" value="rbfA"/>
    <property type="match status" value="1"/>
</dbReference>
<dbReference type="PANTHER" id="PTHR33515">
    <property type="entry name" value="RIBOSOME-BINDING FACTOR A, CHLOROPLASTIC-RELATED"/>
    <property type="match status" value="1"/>
</dbReference>
<dbReference type="PANTHER" id="PTHR33515:SF1">
    <property type="entry name" value="RIBOSOME-BINDING FACTOR A, CHLOROPLASTIC-RELATED"/>
    <property type="match status" value="1"/>
</dbReference>
<dbReference type="Pfam" id="PF02033">
    <property type="entry name" value="RBFA"/>
    <property type="match status" value="1"/>
</dbReference>
<dbReference type="SUPFAM" id="SSF89919">
    <property type="entry name" value="Ribosome-binding factor A, RbfA"/>
    <property type="match status" value="1"/>
</dbReference>
<dbReference type="PROSITE" id="PS01319">
    <property type="entry name" value="RBFA"/>
    <property type="match status" value="1"/>
</dbReference>
<keyword id="KW-0963">Cytoplasm</keyword>
<keyword id="KW-0690">Ribosome biogenesis</keyword>